<comment type="function">
    <text evidence="1">One of the primary rRNA binding proteins, it binds directly to 16S rRNA where it helps nucleate assembly of the platform of the 30S subunit by binding and bridging several RNA helices of the 16S rRNA.</text>
</comment>
<comment type="function">
    <text evidence="1">Forms an intersubunit bridge (bridge B4) with the 23S rRNA of the 50S subunit in the ribosome.</text>
</comment>
<comment type="subunit">
    <text evidence="1">Part of the 30S ribosomal subunit. Forms a bridge to the 50S subunit in the 70S ribosome, contacting the 23S rRNA.</text>
</comment>
<comment type="similarity">
    <text evidence="1">Belongs to the universal ribosomal protein uS15 family.</text>
</comment>
<name>RS15_TROW8</name>
<protein>
    <recommendedName>
        <fullName evidence="1">Small ribosomal subunit protein uS15</fullName>
    </recommendedName>
    <alternativeName>
        <fullName evidence="2">30S ribosomal protein S15</fullName>
    </alternativeName>
</protein>
<proteinExistence type="inferred from homology"/>
<sequence length="90" mass="10268">MARKLDMDKGAIISEYGLSKGDTGSPEVQIALLTARIARLTQHLKEHSFDHHSRRGLMLMVGRRRRLLSYLHGVDVSRYRAILSNLGLRR</sequence>
<reference key="1">
    <citation type="journal article" date="2003" name="Lancet">
        <title>Sequencing and analysis of the genome of the Whipple's disease bacterium Tropheryma whipplei.</title>
        <authorList>
            <person name="Bentley S.D."/>
            <person name="Maiwald M."/>
            <person name="Murphy L.D."/>
            <person name="Pallen M.J."/>
            <person name="Yeats C.A."/>
            <person name="Dover L.G."/>
            <person name="Norbertczak H.T."/>
            <person name="Besra G.S."/>
            <person name="Quail M.A."/>
            <person name="Harris D.E."/>
            <person name="von Herbay A."/>
            <person name="Goble A."/>
            <person name="Rutter S."/>
            <person name="Squares R."/>
            <person name="Squares S."/>
            <person name="Barrell B.G."/>
            <person name="Parkhill J."/>
            <person name="Relman D.A."/>
        </authorList>
    </citation>
    <scope>NUCLEOTIDE SEQUENCE [LARGE SCALE GENOMIC DNA]</scope>
    <source>
        <strain>TW08/27</strain>
    </source>
</reference>
<dbReference type="EMBL" id="BX251411">
    <property type="protein sequence ID" value="CAD67018.1"/>
    <property type="molecule type" value="Genomic_DNA"/>
</dbReference>
<dbReference type="RefSeq" id="WP_011096298.1">
    <property type="nucleotide sequence ID" value="NC_004551.1"/>
</dbReference>
<dbReference type="SMR" id="Q83HX8"/>
<dbReference type="GeneID" id="67388119"/>
<dbReference type="KEGG" id="tws:TW346"/>
<dbReference type="HOGENOM" id="CLU_148518_0_0_11"/>
<dbReference type="GO" id="GO:0022627">
    <property type="term" value="C:cytosolic small ribosomal subunit"/>
    <property type="evidence" value="ECO:0007669"/>
    <property type="project" value="TreeGrafter"/>
</dbReference>
<dbReference type="GO" id="GO:0019843">
    <property type="term" value="F:rRNA binding"/>
    <property type="evidence" value="ECO:0007669"/>
    <property type="project" value="UniProtKB-UniRule"/>
</dbReference>
<dbReference type="GO" id="GO:0003735">
    <property type="term" value="F:structural constituent of ribosome"/>
    <property type="evidence" value="ECO:0007669"/>
    <property type="project" value="InterPro"/>
</dbReference>
<dbReference type="GO" id="GO:0006412">
    <property type="term" value="P:translation"/>
    <property type="evidence" value="ECO:0007669"/>
    <property type="project" value="UniProtKB-UniRule"/>
</dbReference>
<dbReference type="CDD" id="cd00353">
    <property type="entry name" value="Ribosomal_S15p_S13e"/>
    <property type="match status" value="1"/>
</dbReference>
<dbReference type="FunFam" id="1.10.287.10:FF:000002">
    <property type="entry name" value="30S ribosomal protein S15"/>
    <property type="match status" value="1"/>
</dbReference>
<dbReference type="Gene3D" id="6.10.250.3130">
    <property type="match status" value="1"/>
</dbReference>
<dbReference type="Gene3D" id="1.10.287.10">
    <property type="entry name" value="S15/NS1, RNA-binding"/>
    <property type="match status" value="1"/>
</dbReference>
<dbReference type="HAMAP" id="MF_01343_B">
    <property type="entry name" value="Ribosomal_uS15_B"/>
    <property type="match status" value="1"/>
</dbReference>
<dbReference type="InterPro" id="IPR000589">
    <property type="entry name" value="Ribosomal_uS15"/>
</dbReference>
<dbReference type="InterPro" id="IPR005290">
    <property type="entry name" value="Ribosomal_uS15_bac-type"/>
</dbReference>
<dbReference type="InterPro" id="IPR009068">
    <property type="entry name" value="uS15_NS1_RNA-bd_sf"/>
</dbReference>
<dbReference type="NCBIfam" id="TIGR00952">
    <property type="entry name" value="S15_bact"/>
    <property type="match status" value="1"/>
</dbReference>
<dbReference type="PANTHER" id="PTHR23321">
    <property type="entry name" value="RIBOSOMAL PROTEIN S15, BACTERIAL AND ORGANELLAR"/>
    <property type="match status" value="1"/>
</dbReference>
<dbReference type="PANTHER" id="PTHR23321:SF26">
    <property type="entry name" value="SMALL RIBOSOMAL SUBUNIT PROTEIN US15M"/>
    <property type="match status" value="1"/>
</dbReference>
<dbReference type="Pfam" id="PF00312">
    <property type="entry name" value="Ribosomal_S15"/>
    <property type="match status" value="1"/>
</dbReference>
<dbReference type="SMART" id="SM01387">
    <property type="entry name" value="Ribosomal_S15"/>
    <property type="match status" value="1"/>
</dbReference>
<dbReference type="SUPFAM" id="SSF47060">
    <property type="entry name" value="S15/NS1 RNA-binding domain"/>
    <property type="match status" value="1"/>
</dbReference>
<evidence type="ECO:0000255" key="1">
    <source>
        <dbReference type="HAMAP-Rule" id="MF_01343"/>
    </source>
</evidence>
<evidence type="ECO:0000305" key="2"/>
<organism>
    <name type="scientific">Tropheryma whipplei (strain TW08/27)</name>
    <name type="common">Whipple's bacillus</name>
    <dbReference type="NCBI Taxonomy" id="218496"/>
    <lineage>
        <taxon>Bacteria</taxon>
        <taxon>Bacillati</taxon>
        <taxon>Actinomycetota</taxon>
        <taxon>Actinomycetes</taxon>
        <taxon>Micrococcales</taxon>
        <taxon>Tropherymataceae</taxon>
        <taxon>Tropheryma</taxon>
    </lineage>
</organism>
<accession>Q83HX8</accession>
<keyword id="KW-0687">Ribonucleoprotein</keyword>
<keyword id="KW-0689">Ribosomal protein</keyword>
<keyword id="KW-0694">RNA-binding</keyword>
<keyword id="KW-0699">rRNA-binding</keyword>
<gene>
    <name evidence="1" type="primary">rpsO</name>
    <name type="ordered locus">TW346</name>
</gene>
<feature type="chain" id="PRO_0000115578" description="Small ribosomal subunit protein uS15">
    <location>
        <begin position="1"/>
        <end position="90"/>
    </location>
</feature>